<evidence type="ECO:0000255" key="1">
    <source>
        <dbReference type="HAMAP-Rule" id="MF_00191"/>
    </source>
</evidence>
<feature type="chain" id="PRO_1000021134" description="4-hydroxy-3-methylbut-2-enyl diphosphate reductase">
    <location>
        <begin position="1"/>
        <end position="316"/>
    </location>
</feature>
<feature type="active site" description="Proton donor" evidence="1">
    <location>
        <position position="126"/>
    </location>
</feature>
<feature type="binding site" evidence="1">
    <location>
        <position position="12"/>
    </location>
    <ligand>
        <name>[4Fe-4S] cluster</name>
        <dbReference type="ChEBI" id="CHEBI:49883"/>
    </ligand>
</feature>
<feature type="binding site" evidence="1">
    <location>
        <position position="41"/>
    </location>
    <ligand>
        <name>(2E)-4-hydroxy-3-methylbut-2-enyl diphosphate</name>
        <dbReference type="ChEBI" id="CHEBI:128753"/>
    </ligand>
</feature>
<feature type="binding site" evidence="1">
    <location>
        <position position="41"/>
    </location>
    <ligand>
        <name>dimethylallyl diphosphate</name>
        <dbReference type="ChEBI" id="CHEBI:57623"/>
    </ligand>
</feature>
<feature type="binding site" evidence="1">
    <location>
        <position position="41"/>
    </location>
    <ligand>
        <name>isopentenyl diphosphate</name>
        <dbReference type="ChEBI" id="CHEBI:128769"/>
    </ligand>
</feature>
<feature type="binding site" evidence="1">
    <location>
        <position position="74"/>
    </location>
    <ligand>
        <name>(2E)-4-hydroxy-3-methylbut-2-enyl diphosphate</name>
        <dbReference type="ChEBI" id="CHEBI:128753"/>
    </ligand>
</feature>
<feature type="binding site" evidence="1">
    <location>
        <position position="74"/>
    </location>
    <ligand>
        <name>dimethylallyl diphosphate</name>
        <dbReference type="ChEBI" id="CHEBI:57623"/>
    </ligand>
</feature>
<feature type="binding site" evidence="1">
    <location>
        <position position="74"/>
    </location>
    <ligand>
        <name>isopentenyl diphosphate</name>
        <dbReference type="ChEBI" id="CHEBI:128769"/>
    </ligand>
</feature>
<feature type="binding site" evidence="1">
    <location>
        <position position="96"/>
    </location>
    <ligand>
        <name>[4Fe-4S] cluster</name>
        <dbReference type="ChEBI" id="CHEBI:49883"/>
    </ligand>
</feature>
<feature type="binding site" evidence="1">
    <location>
        <position position="124"/>
    </location>
    <ligand>
        <name>(2E)-4-hydroxy-3-methylbut-2-enyl diphosphate</name>
        <dbReference type="ChEBI" id="CHEBI:128753"/>
    </ligand>
</feature>
<feature type="binding site" evidence="1">
    <location>
        <position position="124"/>
    </location>
    <ligand>
        <name>dimethylallyl diphosphate</name>
        <dbReference type="ChEBI" id="CHEBI:57623"/>
    </ligand>
</feature>
<feature type="binding site" evidence="1">
    <location>
        <position position="124"/>
    </location>
    <ligand>
        <name>isopentenyl diphosphate</name>
        <dbReference type="ChEBI" id="CHEBI:128769"/>
    </ligand>
</feature>
<feature type="binding site" evidence="1">
    <location>
        <position position="167"/>
    </location>
    <ligand>
        <name>(2E)-4-hydroxy-3-methylbut-2-enyl diphosphate</name>
        <dbReference type="ChEBI" id="CHEBI:128753"/>
    </ligand>
</feature>
<feature type="binding site" evidence="1">
    <location>
        <position position="197"/>
    </location>
    <ligand>
        <name>[4Fe-4S] cluster</name>
        <dbReference type="ChEBI" id="CHEBI:49883"/>
    </ligand>
</feature>
<feature type="binding site" evidence="1">
    <location>
        <position position="225"/>
    </location>
    <ligand>
        <name>(2E)-4-hydroxy-3-methylbut-2-enyl diphosphate</name>
        <dbReference type="ChEBI" id="CHEBI:128753"/>
    </ligand>
</feature>
<feature type="binding site" evidence="1">
    <location>
        <position position="225"/>
    </location>
    <ligand>
        <name>dimethylallyl diphosphate</name>
        <dbReference type="ChEBI" id="CHEBI:57623"/>
    </ligand>
</feature>
<feature type="binding site" evidence="1">
    <location>
        <position position="225"/>
    </location>
    <ligand>
        <name>isopentenyl diphosphate</name>
        <dbReference type="ChEBI" id="CHEBI:128769"/>
    </ligand>
</feature>
<feature type="binding site" evidence="1">
    <location>
        <position position="226"/>
    </location>
    <ligand>
        <name>(2E)-4-hydroxy-3-methylbut-2-enyl diphosphate</name>
        <dbReference type="ChEBI" id="CHEBI:128753"/>
    </ligand>
</feature>
<feature type="binding site" evidence="1">
    <location>
        <position position="226"/>
    </location>
    <ligand>
        <name>dimethylallyl diphosphate</name>
        <dbReference type="ChEBI" id="CHEBI:57623"/>
    </ligand>
</feature>
<feature type="binding site" evidence="1">
    <location>
        <position position="226"/>
    </location>
    <ligand>
        <name>isopentenyl diphosphate</name>
        <dbReference type="ChEBI" id="CHEBI:128769"/>
    </ligand>
</feature>
<feature type="binding site" evidence="1">
    <location>
        <position position="227"/>
    </location>
    <ligand>
        <name>(2E)-4-hydroxy-3-methylbut-2-enyl diphosphate</name>
        <dbReference type="ChEBI" id="CHEBI:128753"/>
    </ligand>
</feature>
<feature type="binding site" evidence="1">
    <location>
        <position position="227"/>
    </location>
    <ligand>
        <name>dimethylallyl diphosphate</name>
        <dbReference type="ChEBI" id="CHEBI:57623"/>
    </ligand>
</feature>
<feature type="binding site" evidence="1">
    <location>
        <position position="227"/>
    </location>
    <ligand>
        <name>isopentenyl diphosphate</name>
        <dbReference type="ChEBI" id="CHEBI:128769"/>
    </ligand>
</feature>
<feature type="binding site" evidence="1">
    <location>
        <position position="269"/>
    </location>
    <ligand>
        <name>(2E)-4-hydroxy-3-methylbut-2-enyl diphosphate</name>
        <dbReference type="ChEBI" id="CHEBI:128753"/>
    </ligand>
</feature>
<feature type="binding site" evidence="1">
    <location>
        <position position="269"/>
    </location>
    <ligand>
        <name>dimethylallyl diphosphate</name>
        <dbReference type="ChEBI" id="CHEBI:57623"/>
    </ligand>
</feature>
<feature type="binding site" evidence="1">
    <location>
        <position position="269"/>
    </location>
    <ligand>
        <name>isopentenyl diphosphate</name>
        <dbReference type="ChEBI" id="CHEBI:128769"/>
    </ligand>
</feature>
<organism>
    <name type="scientific">Klebsiella pneumoniae subsp. pneumoniae (strain ATCC 700721 / MGH 78578)</name>
    <dbReference type="NCBI Taxonomy" id="272620"/>
    <lineage>
        <taxon>Bacteria</taxon>
        <taxon>Pseudomonadati</taxon>
        <taxon>Pseudomonadota</taxon>
        <taxon>Gammaproteobacteria</taxon>
        <taxon>Enterobacterales</taxon>
        <taxon>Enterobacteriaceae</taxon>
        <taxon>Klebsiella/Raoultella group</taxon>
        <taxon>Klebsiella</taxon>
        <taxon>Klebsiella pneumoniae complex</taxon>
    </lineage>
</organism>
<protein>
    <recommendedName>
        <fullName evidence="1">4-hydroxy-3-methylbut-2-enyl diphosphate reductase</fullName>
        <shortName evidence="1">HMBPP reductase</shortName>
        <ecNumber evidence="1">1.17.7.4</ecNumber>
    </recommendedName>
</protein>
<reference key="1">
    <citation type="submission" date="2006-09" db="EMBL/GenBank/DDBJ databases">
        <authorList>
            <consortium name="The Klebsiella pneumonia Genome Sequencing Project"/>
            <person name="McClelland M."/>
            <person name="Sanderson E.K."/>
            <person name="Spieth J."/>
            <person name="Clifton W.S."/>
            <person name="Latreille P."/>
            <person name="Sabo A."/>
            <person name="Pepin K."/>
            <person name="Bhonagiri V."/>
            <person name="Porwollik S."/>
            <person name="Ali J."/>
            <person name="Wilson R.K."/>
        </authorList>
    </citation>
    <scope>NUCLEOTIDE SEQUENCE [LARGE SCALE GENOMIC DNA]</scope>
    <source>
        <strain>ATCC 700721 / MGH 78578</strain>
    </source>
</reference>
<keyword id="KW-0004">4Fe-4S</keyword>
<keyword id="KW-0408">Iron</keyword>
<keyword id="KW-0411">Iron-sulfur</keyword>
<keyword id="KW-0414">Isoprene biosynthesis</keyword>
<keyword id="KW-0479">Metal-binding</keyword>
<keyword id="KW-0560">Oxidoreductase</keyword>
<name>ISPH_KLEP7</name>
<sequence length="316" mass="34447">MQILLANPRGFCAGVDRAISIVENALTLYGAPIYVRHEVVHNRYVVDSLRKRGAIFIEQISEVPDGAILIFSAHGVSQAVRNEAKSRDLTVFDATCPLVTKVHMEVARASRRGEESILIGHAGHPEVEGTMGQYNNPQGGMYLVESPEDVLKLEVKNDARLSFMTQTTLSVDDTSDVIDALRARFPKIVGPRKDDICYATTNRQEAVRALAEQADVVLVVGSKNSSNSNRLAELAQRMGKAAYLIDDASDIQEAWVKDAACVGVTAGASAPDILVQNVITRLQELGGGEAVPLEGREENIVFEVPKELRVDVREVE</sequence>
<comment type="function">
    <text evidence="1">Catalyzes the conversion of 1-hydroxy-2-methyl-2-(E)-butenyl 4-diphosphate (HMBPP) into a mixture of isopentenyl diphosphate (IPP) and dimethylallyl diphosphate (DMAPP). Acts in the terminal step of the DOXP/MEP pathway for isoprenoid precursor biosynthesis.</text>
</comment>
<comment type="catalytic activity">
    <reaction evidence="1">
        <text>isopentenyl diphosphate + 2 oxidized [2Fe-2S]-[ferredoxin] + H2O = (2E)-4-hydroxy-3-methylbut-2-enyl diphosphate + 2 reduced [2Fe-2S]-[ferredoxin] + 2 H(+)</text>
        <dbReference type="Rhea" id="RHEA:24488"/>
        <dbReference type="Rhea" id="RHEA-COMP:10000"/>
        <dbReference type="Rhea" id="RHEA-COMP:10001"/>
        <dbReference type="ChEBI" id="CHEBI:15377"/>
        <dbReference type="ChEBI" id="CHEBI:15378"/>
        <dbReference type="ChEBI" id="CHEBI:33737"/>
        <dbReference type="ChEBI" id="CHEBI:33738"/>
        <dbReference type="ChEBI" id="CHEBI:128753"/>
        <dbReference type="ChEBI" id="CHEBI:128769"/>
        <dbReference type="EC" id="1.17.7.4"/>
    </reaction>
</comment>
<comment type="catalytic activity">
    <reaction evidence="1">
        <text>dimethylallyl diphosphate + 2 oxidized [2Fe-2S]-[ferredoxin] + H2O = (2E)-4-hydroxy-3-methylbut-2-enyl diphosphate + 2 reduced [2Fe-2S]-[ferredoxin] + 2 H(+)</text>
        <dbReference type="Rhea" id="RHEA:24825"/>
        <dbReference type="Rhea" id="RHEA-COMP:10000"/>
        <dbReference type="Rhea" id="RHEA-COMP:10001"/>
        <dbReference type="ChEBI" id="CHEBI:15377"/>
        <dbReference type="ChEBI" id="CHEBI:15378"/>
        <dbReference type="ChEBI" id="CHEBI:33737"/>
        <dbReference type="ChEBI" id="CHEBI:33738"/>
        <dbReference type="ChEBI" id="CHEBI:57623"/>
        <dbReference type="ChEBI" id="CHEBI:128753"/>
        <dbReference type="EC" id="1.17.7.4"/>
    </reaction>
</comment>
<comment type="cofactor">
    <cofactor evidence="1">
        <name>[4Fe-4S] cluster</name>
        <dbReference type="ChEBI" id="CHEBI:49883"/>
    </cofactor>
    <text evidence="1">Binds 1 [4Fe-4S] cluster per subunit.</text>
</comment>
<comment type="pathway">
    <text evidence="1">Isoprenoid biosynthesis; dimethylallyl diphosphate biosynthesis; dimethylallyl diphosphate from (2E)-4-hydroxy-3-methylbutenyl diphosphate: step 1/1.</text>
</comment>
<comment type="pathway">
    <text evidence="1">Isoprenoid biosynthesis; isopentenyl diphosphate biosynthesis via DXP pathway; isopentenyl diphosphate from 1-deoxy-D-xylulose 5-phosphate: step 6/6.</text>
</comment>
<comment type="subunit">
    <text evidence="1">Homodimer.</text>
</comment>
<comment type="similarity">
    <text evidence="1">Belongs to the IspH family.</text>
</comment>
<accession>A6T4G3</accession>
<gene>
    <name evidence="1" type="primary">ispH</name>
    <name type="ordered locus">KPN78578_00230</name>
    <name type="ORF">KPN_00024</name>
</gene>
<dbReference type="EC" id="1.17.7.4" evidence="1"/>
<dbReference type="EMBL" id="CP000647">
    <property type="protein sequence ID" value="ABR75484.1"/>
    <property type="molecule type" value="Genomic_DNA"/>
</dbReference>
<dbReference type="RefSeq" id="WP_002887979.1">
    <property type="nucleotide sequence ID" value="NC_009648.1"/>
</dbReference>
<dbReference type="SMR" id="A6T4G3"/>
<dbReference type="STRING" id="272620.KPN_00024"/>
<dbReference type="jPOST" id="A6T4G3"/>
<dbReference type="PaxDb" id="272620-KPN_00024"/>
<dbReference type="EnsemblBacteria" id="ABR75484">
    <property type="protein sequence ID" value="ABR75484"/>
    <property type="gene ID" value="KPN_00024"/>
</dbReference>
<dbReference type="GeneID" id="93275092"/>
<dbReference type="KEGG" id="kpn:KPN_00024"/>
<dbReference type="HOGENOM" id="CLU_027486_1_0_6"/>
<dbReference type="UniPathway" id="UPA00056">
    <property type="reaction ID" value="UER00097"/>
</dbReference>
<dbReference type="UniPathway" id="UPA00059">
    <property type="reaction ID" value="UER00105"/>
</dbReference>
<dbReference type="Proteomes" id="UP000000265">
    <property type="component" value="Chromosome"/>
</dbReference>
<dbReference type="GO" id="GO:0051539">
    <property type="term" value="F:4 iron, 4 sulfur cluster binding"/>
    <property type="evidence" value="ECO:0007669"/>
    <property type="project" value="UniProtKB-UniRule"/>
</dbReference>
<dbReference type="GO" id="GO:0051745">
    <property type="term" value="F:4-hydroxy-3-methylbut-2-enyl diphosphate reductase activity"/>
    <property type="evidence" value="ECO:0007669"/>
    <property type="project" value="UniProtKB-UniRule"/>
</dbReference>
<dbReference type="GO" id="GO:0046872">
    <property type="term" value="F:metal ion binding"/>
    <property type="evidence" value="ECO:0007669"/>
    <property type="project" value="UniProtKB-KW"/>
</dbReference>
<dbReference type="GO" id="GO:0050992">
    <property type="term" value="P:dimethylallyl diphosphate biosynthetic process"/>
    <property type="evidence" value="ECO:0007669"/>
    <property type="project" value="UniProtKB-UniRule"/>
</dbReference>
<dbReference type="GO" id="GO:0019288">
    <property type="term" value="P:isopentenyl diphosphate biosynthetic process, methylerythritol 4-phosphate pathway"/>
    <property type="evidence" value="ECO:0007669"/>
    <property type="project" value="UniProtKB-UniRule"/>
</dbReference>
<dbReference type="GO" id="GO:0016114">
    <property type="term" value="P:terpenoid biosynthetic process"/>
    <property type="evidence" value="ECO:0007669"/>
    <property type="project" value="UniProtKB-UniRule"/>
</dbReference>
<dbReference type="CDD" id="cd13944">
    <property type="entry name" value="lytB_ispH"/>
    <property type="match status" value="1"/>
</dbReference>
<dbReference type="FunFam" id="3.40.50.11270:FF:000001">
    <property type="entry name" value="4-hydroxy-3-methylbut-2-enyl diphosphate reductase"/>
    <property type="match status" value="1"/>
</dbReference>
<dbReference type="Gene3D" id="3.40.50.11270">
    <property type="match status" value="1"/>
</dbReference>
<dbReference type="Gene3D" id="3.40.1010.20">
    <property type="entry name" value="4-hydroxy-3-methylbut-2-enyl diphosphate reductase, catalytic domain"/>
    <property type="match status" value="2"/>
</dbReference>
<dbReference type="HAMAP" id="MF_00191">
    <property type="entry name" value="IspH"/>
    <property type="match status" value="1"/>
</dbReference>
<dbReference type="InterPro" id="IPR003451">
    <property type="entry name" value="LytB/IspH"/>
</dbReference>
<dbReference type="NCBIfam" id="TIGR00216">
    <property type="entry name" value="ispH_lytB"/>
    <property type="match status" value="1"/>
</dbReference>
<dbReference type="NCBIfam" id="NF002188">
    <property type="entry name" value="PRK01045.1-2"/>
    <property type="match status" value="1"/>
</dbReference>
<dbReference type="NCBIfam" id="NF002190">
    <property type="entry name" value="PRK01045.1-4"/>
    <property type="match status" value="1"/>
</dbReference>
<dbReference type="PANTHER" id="PTHR30426">
    <property type="entry name" value="4-HYDROXY-3-METHYLBUT-2-ENYL DIPHOSPHATE REDUCTASE"/>
    <property type="match status" value="1"/>
</dbReference>
<dbReference type="PANTHER" id="PTHR30426:SF0">
    <property type="entry name" value="4-HYDROXY-3-METHYLBUT-2-ENYL DIPHOSPHATE REDUCTASE"/>
    <property type="match status" value="1"/>
</dbReference>
<dbReference type="Pfam" id="PF02401">
    <property type="entry name" value="LYTB"/>
    <property type="match status" value="1"/>
</dbReference>
<proteinExistence type="inferred from homology"/>